<gene>
    <name evidence="1" type="primary">orn</name>
    <name type="ordered locus">CPS_4379</name>
</gene>
<evidence type="ECO:0000255" key="1">
    <source>
        <dbReference type="HAMAP-Rule" id="MF_00045"/>
    </source>
</evidence>
<evidence type="ECO:0007829" key="2">
    <source>
        <dbReference type="PDB" id="6A4D"/>
    </source>
</evidence>
<evidence type="ECO:0007829" key="3">
    <source>
        <dbReference type="PDB" id="6A4F"/>
    </source>
</evidence>
<comment type="function">
    <text evidence="1">3'-to-5' exoribonuclease specific for small oligoribonucleotides.</text>
</comment>
<comment type="subcellular location">
    <subcellularLocation>
        <location evidence="1">Cytoplasm</location>
    </subcellularLocation>
</comment>
<comment type="similarity">
    <text evidence="1">Belongs to the oligoribonuclease family.</text>
</comment>
<feature type="chain" id="PRO_1000004244" description="Oligoribonuclease">
    <location>
        <begin position="1"/>
        <end position="181"/>
    </location>
</feature>
<feature type="domain" description="Exonuclease" evidence="1">
    <location>
        <begin position="8"/>
        <end position="171"/>
    </location>
</feature>
<feature type="active site" evidence="1">
    <location>
        <position position="129"/>
    </location>
</feature>
<feature type="turn" evidence="3">
    <location>
        <begin position="1"/>
        <end position="3"/>
    </location>
</feature>
<feature type="strand" evidence="2">
    <location>
        <begin position="8"/>
        <end position="18"/>
    </location>
</feature>
<feature type="turn" evidence="2">
    <location>
        <begin position="20"/>
        <end position="22"/>
    </location>
</feature>
<feature type="strand" evidence="2">
    <location>
        <begin position="25"/>
        <end position="33"/>
    </location>
</feature>
<feature type="strand" evidence="2">
    <location>
        <begin position="39"/>
        <end position="42"/>
    </location>
</feature>
<feature type="helix" evidence="2">
    <location>
        <begin position="52"/>
        <end position="56"/>
    </location>
</feature>
<feature type="helix" evidence="2">
    <location>
        <begin position="60"/>
        <end position="68"/>
    </location>
</feature>
<feature type="helix" evidence="2">
    <location>
        <begin position="71"/>
        <end position="77"/>
    </location>
</feature>
<feature type="helix" evidence="2">
    <location>
        <begin position="82"/>
        <end position="96"/>
    </location>
</feature>
<feature type="turn" evidence="2">
    <location>
        <begin position="99"/>
        <end position="101"/>
    </location>
</feature>
<feature type="strand" evidence="2">
    <location>
        <begin position="104"/>
        <end position="106"/>
    </location>
</feature>
<feature type="helix" evidence="2">
    <location>
        <begin position="109"/>
        <end position="119"/>
    </location>
</feature>
<feature type="helix" evidence="2">
    <location>
        <begin position="121"/>
        <end position="124"/>
    </location>
</feature>
<feature type="strand" evidence="2">
    <location>
        <begin position="131"/>
        <end position="133"/>
    </location>
</feature>
<feature type="helix" evidence="2">
    <location>
        <begin position="134"/>
        <end position="144"/>
    </location>
</feature>
<feature type="helix" evidence="2">
    <location>
        <begin position="146"/>
        <end position="150"/>
    </location>
</feature>
<feature type="helix" evidence="2">
    <location>
        <begin position="160"/>
        <end position="177"/>
    </location>
</feature>
<sequence>MAGNDSNLIWLDLEMTGLEPVEDVILEIAIIITDSELNILAQGPIFAISQTDDVLDNMNPWCIEHHGKSGLTQRCRDSEVSLAHATKESLAFVQEWVPQGKSPMCGNSIGQDRRFINKYMPDFEDHFHYRNLDVSTIKELAKRWKPEVLESVVKTGAHLALDDIKESIAELKVYRELFFKL</sequence>
<organism>
    <name type="scientific">Colwellia psychrerythraea (strain 34H / ATCC BAA-681)</name>
    <name type="common">Vibrio psychroerythus</name>
    <dbReference type="NCBI Taxonomy" id="167879"/>
    <lineage>
        <taxon>Bacteria</taxon>
        <taxon>Pseudomonadati</taxon>
        <taxon>Pseudomonadota</taxon>
        <taxon>Gammaproteobacteria</taxon>
        <taxon>Alteromonadales</taxon>
        <taxon>Colwelliaceae</taxon>
        <taxon>Colwellia</taxon>
    </lineage>
</organism>
<proteinExistence type="evidence at protein level"/>
<reference key="1">
    <citation type="journal article" date="2005" name="Proc. Natl. Acad. Sci. U.S.A.">
        <title>The psychrophilic lifestyle as revealed by the genome sequence of Colwellia psychrerythraea 34H through genomic and proteomic analyses.</title>
        <authorList>
            <person name="Methe B.A."/>
            <person name="Nelson K.E."/>
            <person name="Deming J.W."/>
            <person name="Momen B."/>
            <person name="Melamud E."/>
            <person name="Zhang X."/>
            <person name="Moult J."/>
            <person name="Madupu R."/>
            <person name="Nelson W.C."/>
            <person name="Dodson R.J."/>
            <person name="Brinkac L.M."/>
            <person name="Daugherty S.C."/>
            <person name="Durkin A.S."/>
            <person name="DeBoy R.T."/>
            <person name="Kolonay J.F."/>
            <person name="Sullivan S.A."/>
            <person name="Zhou L."/>
            <person name="Davidsen T.M."/>
            <person name="Wu M."/>
            <person name="Huston A.L."/>
            <person name="Lewis M."/>
            <person name="Weaver B."/>
            <person name="Weidman J.F."/>
            <person name="Khouri H."/>
            <person name="Utterback T.R."/>
            <person name="Feldblyum T.V."/>
            <person name="Fraser C.M."/>
        </authorList>
    </citation>
    <scope>NUCLEOTIDE SEQUENCE [LARGE SCALE GENOMIC DNA]</scope>
    <source>
        <strain>34H / ATCC BAA-681</strain>
    </source>
</reference>
<name>ORN_COLP3</name>
<accession>Q47VZ4</accession>
<protein>
    <recommendedName>
        <fullName evidence="1">Oligoribonuclease</fullName>
        <ecNumber evidence="1">3.1.15.-</ecNumber>
    </recommendedName>
</protein>
<keyword id="KW-0002">3D-structure</keyword>
<keyword id="KW-0963">Cytoplasm</keyword>
<keyword id="KW-0269">Exonuclease</keyword>
<keyword id="KW-0378">Hydrolase</keyword>
<keyword id="KW-0540">Nuclease</keyword>
<dbReference type="EC" id="3.1.15.-" evidence="1"/>
<dbReference type="EMBL" id="CP000083">
    <property type="protein sequence ID" value="AAZ28688.1"/>
    <property type="molecule type" value="Genomic_DNA"/>
</dbReference>
<dbReference type="RefSeq" id="WP_011045109.1">
    <property type="nucleotide sequence ID" value="NC_003910.7"/>
</dbReference>
<dbReference type="PDB" id="6A4A">
    <property type="method" value="X-ray"/>
    <property type="resolution" value="2.70 A"/>
    <property type="chains" value="A=1-181"/>
</dbReference>
<dbReference type="PDB" id="6A4D">
    <property type="method" value="X-ray"/>
    <property type="resolution" value="2.19 A"/>
    <property type="chains" value="A/B=1-181"/>
</dbReference>
<dbReference type="PDB" id="6A4E">
    <property type="method" value="X-ray"/>
    <property type="resolution" value="2.45 A"/>
    <property type="chains" value="A/C=1-181"/>
</dbReference>
<dbReference type="PDB" id="6A4F">
    <property type="method" value="X-ray"/>
    <property type="resolution" value="2.21 A"/>
    <property type="chains" value="A/B=1-181"/>
</dbReference>
<dbReference type="PDBsum" id="6A4A"/>
<dbReference type="PDBsum" id="6A4D"/>
<dbReference type="PDBsum" id="6A4E"/>
<dbReference type="PDBsum" id="6A4F"/>
<dbReference type="SMR" id="Q47VZ4"/>
<dbReference type="STRING" id="167879.CPS_4379"/>
<dbReference type="KEGG" id="cps:CPS_4379"/>
<dbReference type="eggNOG" id="COG1949">
    <property type="taxonomic scope" value="Bacteria"/>
</dbReference>
<dbReference type="HOGENOM" id="CLU_064761_2_0_6"/>
<dbReference type="BRENDA" id="3.1.13.3">
    <property type="organism ID" value="8143"/>
</dbReference>
<dbReference type="Proteomes" id="UP000000547">
    <property type="component" value="Chromosome"/>
</dbReference>
<dbReference type="GO" id="GO:0005737">
    <property type="term" value="C:cytoplasm"/>
    <property type="evidence" value="ECO:0007669"/>
    <property type="project" value="UniProtKB-SubCell"/>
</dbReference>
<dbReference type="GO" id="GO:0000175">
    <property type="term" value="F:3'-5'-RNA exonuclease activity"/>
    <property type="evidence" value="ECO:0007669"/>
    <property type="project" value="InterPro"/>
</dbReference>
<dbReference type="GO" id="GO:0003676">
    <property type="term" value="F:nucleic acid binding"/>
    <property type="evidence" value="ECO:0007669"/>
    <property type="project" value="InterPro"/>
</dbReference>
<dbReference type="GO" id="GO:0006259">
    <property type="term" value="P:DNA metabolic process"/>
    <property type="evidence" value="ECO:0007669"/>
    <property type="project" value="UniProtKB-ARBA"/>
</dbReference>
<dbReference type="CDD" id="cd06135">
    <property type="entry name" value="Orn"/>
    <property type="match status" value="1"/>
</dbReference>
<dbReference type="FunFam" id="3.30.420.10:FF:000003">
    <property type="entry name" value="Oligoribonuclease"/>
    <property type="match status" value="1"/>
</dbReference>
<dbReference type="Gene3D" id="3.30.420.10">
    <property type="entry name" value="Ribonuclease H-like superfamily/Ribonuclease H"/>
    <property type="match status" value="1"/>
</dbReference>
<dbReference type="HAMAP" id="MF_00045">
    <property type="entry name" value="Oligoribonuclease"/>
    <property type="match status" value="1"/>
</dbReference>
<dbReference type="InterPro" id="IPR013520">
    <property type="entry name" value="Exonuclease_RNaseT/DNA_pol3"/>
</dbReference>
<dbReference type="InterPro" id="IPR022894">
    <property type="entry name" value="Oligoribonuclease"/>
</dbReference>
<dbReference type="InterPro" id="IPR012337">
    <property type="entry name" value="RNaseH-like_sf"/>
</dbReference>
<dbReference type="InterPro" id="IPR036397">
    <property type="entry name" value="RNaseH_sf"/>
</dbReference>
<dbReference type="NCBIfam" id="NF003765">
    <property type="entry name" value="PRK05359.1"/>
    <property type="match status" value="1"/>
</dbReference>
<dbReference type="PANTHER" id="PTHR11046">
    <property type="entry name" value="OLIGORIBONUCLEASE, MITOCHONDRIAL"/>
    <property type="match status" value="1"/>
</dbReference>
<dbReference type="PANTHER" id="PTHR11046:SF0">
    <property type="entry name" value="OLIGORIBONUCLEASE, MITOCHONDRIAL"/>
    <property type="match status" value="1"/>
</dbReference>
<dbReference type="Pfam" id="PF00929">
    <property type="entry name" value="RNase_T"/>
    <property type="match status" value="1"/>
</dbReference>
<dbReference type="SMART" id="SM00479">
    <property type="entry name" value="EXOIII"/>
    <property type="match status" value="1"/>
</dbReference>
<dbReference type="SUPFAM" id="SSF53098">
    <property type="entry name" value="Ribonuclease H-like"/>
    <property type="match status" value="1"/>
</dbReference>